<evidence type="ECO:0000255" key="1">
    <source>
        <dbReference type="HAMAP-Rule" id="MF_01368"/>
    </source>
</evidence>
<evidence type="ECO:0000305" key="2"/>
<gene>
    <name evidence="1" type="primary">rplQ</name>
    <name type="ordered locus">A1S_3055</name>
</gene>
<reference key="1">
    <citation type="journal article" date="2007" name="Genes Dev.">
        <title>New insights into Acinetobacter baumannii pathogenesis revealed by high-density pyrosequencing and transposon mutagenesis.</title>
        <authorList>
            <person name="Smith M.G."/>
            <person name="Gianoulis T.A."/>
            <person name="Pukatzki S."/>
            <person name="Mekalanos J.J."/>
            <person name="Ornston L.N."/>
            <person name="Gerstein M."/>
            <person name="Snyder M."/>
        </authorList>
    </citation>
    <scope>NUCLEOTIDE SEQUENCE [LARGE SCALE GENOMIC DNA]</scope>
    <source>
        <strain>ATCC 17978 / DSM 105126 / CIP 53.77 / LMG 1025 / NCDC KC755 / 5377</strain>
    </source>
</reference>
<sequence length="125" mass="13994">MRHRNSGVKLGRTSSHRKAMFQNLANSLFEHELIKTTLPKAKELRRVAEPLITLAKNDTVANRRLAFARTRNAATVGKLFTVLGPRYKERNGGYLRVLKAGFRAGDAAPMAYVELVDREVNTSAE</sequence>
<accession>A3M958</accession>
<organism>
    <name type="scientific">Acinetobacter baumannii (strain ATCC 17978 / DSM 105126 / CIP 53.77 / LMG 1025 / NCDC KC755 / 5377)</name>
    <dbReference type="NCBI Taxonomy" id="400667"/>
    <lineage>
        <taxon>Bacteria</taxon>
        <taxon>Pseudomonadati</taxon>
        <taxon>Pseudomonadota</taxon>
        <taxon>Gammaproteobacteria</taxon>
        <taxon>Moraxellales</taxon>
        <taxon>Moraxellaceae</taxon>
        <taxon>Acinetobacter</taxon>
        <taxon>Acinetobacter calcoaceticus/baumannii complex</taxon>
    </lineage>
</organism>
<proteinExistence type="inferred from homology"/>
<protein>
    <recommendedName>
        <fullName evidence="1">Large ribosomal subunit protein bL17</fullName>
    </recommendedName>
    <alternativeName>
        <fullName evidence="2">50S ribosomal protein L17</fullName>
    </alternativeName>
</protein>
<comment type="subunit">
    <text evidence="1">Part of the 50S ribosomal subunit. Contacts protein L32.</text>
</comment>
<comment type="similarity">
    <text evidence="1">Belongs to the bacterial ribosomal protein bL17 family.</text>
</comment>
<keyword id="KW-0687">Ribonucleoprotein</keyword>
<keyword id="KW-0689">Ribosomal protein</keyword>
<dbReference type="EMBL" id="CP000521">
    <property type="protein sequence ID" value="ABO13452.2"/>
    <property type="molecule type" value="Genomic_DNA"/>
</dbReference>
<dbReference type="RefSeq" id="WP_001216380.1">
    <property type="nucleotide sequence ID" value="NZ_CP053098.1"/>
</dbReference>
<dbReference type="SMR" id="A3M958"/>
<dbReference type="GeneID" id="92895291"/>
<dbReference type="KEGG" id="acb:A1S_3055"/>
<dbReference type="HOGENOM" id="CLU_074407_2_0_6"/>
<dbReference type="GO" id="GO:0022625">
    <property type="term" value="C:cytosolic large ribosomal subunit"/>
    <property type="evidence" value="ECO:0007669"/>
    <property type="project" value="TreeGrafter"/>
</dbReference>
<dbReference type="GO" id="GO:0003735">
    <property type="term" value="F:structural constituent of ribosome"/>
    <property type="evidence" value="ECO:0007669"/>
    <property type="project" value="InterPro"/>
</dbReference>
<dbReference type="GO" id="GO:0006412">
    <property type="term" value="P:translation"/>
    <property type="evidence" value="ECO:0007669"/>
    <property type="project" value="UniProtKB-UniRule"/>
</dbReference>
<dbReference type="FunFam" id="3.90.1030.10:FF:000001">
    <property type="entry name" value="50S ribosomal protein L17"/>
    <property type="match status" value="1"/>
</dbReference>
<dbReference type="Gene3D" id="3.90.1030.10">
    <property type="entry name" value="Ribosomal protein L17"/>
    <property type="match status" value="1"/>
</dbReference>
<dbReference type="HAMAP" id="MF_01368">
    <property type="entry name" value="Ribosomal_bL17"/>
    <property type="match status" value="1"/>
</dbReference>
<dbReference type="InterPro" id="IPR000456">
    <property type="entry name" value="Ribosomal_bL17"/>
</dbReference>
<dbReference type="InterPro" id="IPR047859">
    <property type="entry name" value="Ribosomal_bL17_CS"/>
</dbReference>
<dbReference type="InterPro" id="IPR036373">
    <property type="entry name" value="Ribosomal_bL17_sf"/>
</dbReference>
<dbReference type="NCBIfam" id="TIGR00059">
    <property type="entry name" value="L17"/>
    <property type="match status" value="1"/>
</dbReference>
<dbReference type="PANTHER" id="PTHR14413:SF16">
    <property type="entry name" value="LARGE RIBOSOMAL SUBUNIT PROTEIN BL17M"/>
    <property type="match status" value="1"/>
</dbReference>
<dbReference type="PANTHER" id="PTHR14413">
    <property type="entry name" value="RIBOSOMAL PROTEIN L17"/>
    <property type="match status" value="1"/>
</dbReference>
<dbReference type="Pfam" id="PF01196">
    <property type="entry name" value="Ribosomal_L17"/>
    <property type="match status" value="1"/>
</dbReference>
<dbReference type="SUPFAM" id="SSF64263">
    <property type="entry name" value="Prokaryotic ribosomal protein L17"/>
    <property type="match status" value="1"/>
</dbReference>
<dbReference type="PROSITE" id="PS01167">
    <property type="entry name" value="RIBOSOMAL_L17"/>
    <property type="match status" value="1"/>
</dbReference>
<name>RL17_ACIBT</name>
<feature type="chain" id="PRO_1000144361" description="Large ribosomal subunit protein bL17">
    <location>
        <begin position="1"/>
        <end position="125"/>
    </location>
</feature>